<sequence length="256" mass="29013">MAAPMFSIIIPTLNVAAVLPACLDSIARQTCGDFELVLVDGGSTDETLDIANIFAPNLGERLIIHRDTDQGVYDAMNRGVDLATGTWLLFLGADDSLYEADTLARVAAFIGEHEPSDLVYGDVIMRSTNFRWGGAFDLDRLLFKRNICHQAIFYRRGLFGTIGPYNLRYRVLADWDFNIRCFSNPALVTRYMHVVVASYNEFGGLSNTIVDKEFLKRLPMSTRLGIRLVIVLVRRWPKVISRAMVMRTVISWRRRR</sequence>
<reference key="1">
    <citation type="journal article" date="2002" name="J. Bacteriol.">
        <title>Whole-genome comparison of Mycobacterium tuberculosis clinical and laboratory strains.</title>
        <authorList>
            <person name="Fleischmann R.D."/>
            <person name="Alland D."/>
            <person name="Eisen J.A."/>
            <person name="Carpenter L."/>
            <person name="White O."/>
            <person name="Peterson J.D."/>
            <person name="DeBoy R.T."/>
            <person name="Dodson R.J."/>
            <person name="Gwinn M.L."/>
            <person name="Haft D.H."/>
            <person name="Hickey E.K."/>
            <person name="Kolonay J.F."/>
            <person name="Nelson W.C."/>
            <person name="Umayam L.A."/>
            <person name="Ermolaeva M.D."/>
            <person name="Salzberg S.L."/>
            <person name="Delcher A."/>
            <person name="Utterback T.R."/>
            <person name="Weidman J.F."/>
            <person name="Khouri H.M."/>
            <person name="Gill J."/>
            <person name="Mikula A."/>
            <person name="Bishai W."/>
            <person name="Jacobs W.R. Jr."/>
            <person name="Venter J.C."/>
            <person name="Fraser C.M."/>
        </authorList>
    </citation>
    <scope>NUCLEOTIDE SEQUENCE [LARGE SCALE GENOMIC DNA]</scope>
    <source>
        <strain>CDC 1551 / Oshkosh</strain>
    </source>
</reference>
<gene>
    <name type="ordered locus">MT3031</name>
</gene>
<evidence type="ECO:0000250" key="1"/>
<evidence type="ECO:0000305" key="2"/>
<proteinExistence type="inferred from homology"/>
<feature type="chain" id="PRO_0000427225" description="PGL/p-HBAD biosynthesis glycosyltransferase MT3031">
    <location>
        <begin position="1"/>
        <end position="256"/>
    </location>
</feature>
<comment type="function">
    <text evidence="1">Involved in glycosylation steps downstream of mono-O-methyl-glycosyl-p-hydroxybenzoic acid derivative (p-HBAD I) and 2-O-methyl-rhamnosyl-phenolphthiocerol dimycocerosate (mycoside B) during the p-hydroxybenzoic acid derivatives (p-HBAD) and glycosylated phenolphthiocerol dimycocerosates (PGL) biosynthesis.</text>
</comment>
<comment type="similarity">
    <text evidence="2">Belongs to the glycosyltransferase 2 family.</text>
</comment>
<dbReference type="EC" id="2.4.1.-"/>
<dbReference type="EMBL" id="AE000516">
    <property type="protein sequence ID" value="AAK47357.1"/>
    <property type="molecule type" value="Genomic_DNA"/>
</dbReference>
<dbReference type="PIR" id="B70670">
    <property type="entry name" value="B70670"/>
</dbReference>
<dbReference type="SMR" id="P9WMX6"/>
<dbReference type="CAZy" id="GT2">
    <property type="family name" value="Glycosyltransferase Family 2"/>
</dbReference>
<dbReference type="KEGG" id="mtc:MT3031"/>
<dbReference type="HOGENOM" id="CLU_025996_21_1_11"/>
<dbReference type="Proteomes" id="UP000001020">
    <property type="component" value="Chromosome"/>
</dbReference>
<dbReference type="GO" id="GO:0016758">
    <property type="term" value="F:hexosyltransferase activity"/>
    <property type="evidence" value="ECO:0007669"/>
    <property type="project" value="UniProtKB-ARBA"/>
</dbReference>
<dbReference type="GO" id="GO:0009058">
    <property type="term" value="P:biosynthetic process"/>
    <property type="evidence" value="ECO:0007669"/>
    <property type="project" value="UniProtKB-ARBA"/>
</dbReference>
<dbReference type="CDD" id="cd06433">
    <property type="entry name" value="GT_2_WfgS_like"/>
    <property type="match status" value="1"/>
</dbReference>
<dbReference type="Gene3D" id="3.90.550.10">
    <property type="entry name" value="Spore Coat Polysaccharide Biosynthesis Protein SpsA, Chain A"/>
    <property type="match status" value="1"/>
</dbReference>
<dbReference type="InterPro" id="IPR001173">
    <property type="entry name" value="Glyco_trans_2-like"/>
</dbReference>
<dbReference type="InterPro" id="IPR029044">
    <property type="entry name" value="Nucleotide-diphossugar_trans"/>
</dbReference>
<dbReference type="PANTHER" id="PTHR22916">
    <property type="entry name" value="GLYCOSYLTRANSFERASE"/>
    <property type="match status" value="1"/>
</dbReference>
<dbReference type="PANTHER" id="PTHR22916:SF3">
    <property type="entry name" value="UDP-GLCNAC:BETAGAL BETA-1,3-N-ACETYLGLUCOSAMINYLTRANSFERASE-LIKE PROTEIN 1"/>
    <property type="match status" value="1"/>
</dbReference>
<dbReference type="Pfam" id="PF00535">
    <property type="entry name" value="Glycos_transf_2"/>
    <property type="match status" value="1"/>
</dbReference>
<dbReference type="SUPFAM" id="SSF53448">
    <property type="entry name" value="Nucleotide-diphospho-sugar transferases"/>
    <property type="match status" value="1"/>
</dbReference>
<organism>
    <name type="scientific">Mycobacterium tuberculosis (strain CDC 1551 / Oshkosh)</name>
    <dbReference type="NCBI Taxonomy" id="83331"/>
    <lineage>
        <taxon>Bacteria</taxon>
        <taxon>Bacillati</taxon>
        <taxon>Actinomycetota</taxon>
        <taxon>Actinomycetes</taxon>
        <taxon>Mycobacteriales</taxon>
        <taxon>Mycobacteriaceae</taxon>
        <taxon>Mycobacterium</taxon>
        <taxon>Mycobacterium tuberculosis complex</taxon>
    </lineage>
</organism>
<keyword id="KW-0328">Glycosyltransferase</keyword>
<keyword id="KW-1185">Reference proteome</keyword>
<keyword id="KW-0808">Transferase</keyword>
<protein>
    <recommendedName>
        <fullName>PGL/p-HBAD biosynthesis glycosyltransferase MT3031</fullName>
        <ecNumber>2.4.1.-</ecNumber>
    </recommendedName>
</protein>
<accession>P9WMX6</accession>
<accession>L0TBD5</accession>
<accession>P0A599</accession>
<accession>Q50459</accession>
<name>GLTR1_MYCTO</name>